<feature type="chain" id="PRO_0000357474" description="2-hydroxy-3-keto-5-methylthiopentenyl-1-phosphate phosphatase">
    <location>
        <begin position="1"/>
        <end position="219"/>
    </location>
</feature>
<accession>A0RI43</accession>
<name>MTNX_BACAH</name>
<keyword id="KW-0028">Amino-acid biosynthesis</keyword>
<keyword id="KW-0378">Hydrolase</keyword>
<keyword id="KW-0486">Methionine biosynthesis</keyword>
<reference key="1">
    <citation type="journal article" date="2007" name="J. Bacteriol.">
        <title>The complete genome sequence of Bacillus thuringiensis Al Hakam.</title>
        <authorList>
            <person name="Challacombe J.F."/>
            <person name="Altherr M.R."/>
            <person name="Xie G."/>
            <person name="Bhotika S.S."/>
            <person name="Brown N."/>
            <person name="Bruce D."/>
            <person name="Campbell C.S."/>
            <person name="Campbell M.L."/>
            <person name="Chen J."/>
            <person name="Chertkov O."/>
            <person name="Cleland C."/>
            <person name="Dimitrijevic M."/>
            <person name="Doggett N.A."/>
            <person name="Fawcett J.J."/>
            <person name="Glavina T."/>
            <person name="Goodwin L.A."/>
            <person name="Green L.D."/>
            <person name="Han C.S."/>
            <person name="Hill K.K."/>
            <person name="Hitchcock P."/>
            <person name="Jackson P.J."/>
            <person name="Keim P."/>
            <person name="Kewalramani A.R."/>
            <person name="Longmire J."/>
            <person name="Lucas S."/>
            <person name="Malfatti S."/>
            <person name="Martinez D."/>
            <person name="McMurry K."/>
            <person name="Meincke L.J."/>
            <person name="Misra M."/>
            <person name="Moseman B.L."/>
            <person name="Mundt M."/>
            <person name="Munk A.C."/>
            <person name="Okinaka R.T."/>
            <person name="Parson-Quintana B."/>
            <person name="Reilly L.P."/>
            <person name="Richardson P."/>
            <person name="Robinson D.L."/>
            <person name="Saunders E."/>
            <person name="Tapia R."/>
            <person name="Tesmer J.G."/>
            <person name="Thayer N."/>
            <person name="Thompson L.S."/>
            <person name="Tice H."/>
            <person name="Ticknor L.O."/>
            <person name="Wills P.L."/>
            <person name="Gilna P."/>
            <person name="Brettin T.S."/>
        </authorList>
    </citation>
    <scope>NUCLEOTIDE SEQUENCE [LARGE SCALE GENOMIC DNA]</scope>
    <source>
        <strain>Al Hakam</strain>
    </source>
</reference>
<dbReference type="EC" id="3.1.3.87" evidence="1"/>
<dbReference type="EMBL" id="CP000485">
    <property type="protein sequence ID" value="ABK86886.1"/>
    <property type="molecule type" value="Genomic_DNA"/>
</dbReference>
<dbReference type="RefSeq" id="WP_000027477.1">
    <property type="nucleotide sequence ID" value="NC_008600.1"/>
</dbReference>
<dbReference type="SMR" id="A0RI43"/>
<dbReference type="KEGG" id="btl:BALH_3654"/>
<dbReference type="HOGENOM" id="CLU_058495_2_1_9"/>
<dbReference type="UniPathway" id="UPA00904">
    <property type="reaction ID" value="UER00877"/>
</dbReference>
<dbReference type="GO" id="GO:0043716">
    <property type="term" value="F:2-hydroxy-3-keto-5-methylthiopentenyl-1-phosphate phosphatase activity"/>
    <property type="evidence" value="ECO:0007669"/>
    <property type="project" value="UniProtKB-UniRule"/>
</dbReference>
<dbReference type="GO" id="GO:0019509">
    <property type="term" value="P:L-methionine salvage from methylthioadenosine"/>
    <property type="evidence" value="ECO:0007669"/>
    <property type="project" value="UniProtKB-UniRule"/>
</dbReference>
<dbReference type="CDD" id="cd07524">
    <property type="entry name" value="HAD_Pase"/>
    <property type="match status" value="1"/>
</dbReference>
<dbReference type="Gene3D" id="3.90.1470.20">
    <property type="match status" value="1"/>
</dbReference>
<dbReference type="Gene3D" id="3.40.50.1000">
    <property type="entry name" value="HAD superfamily/HAD-like"/>
    <property type="match status" value="1"/>
</dbReference>
<dbReference type="HAMAP" id="MF_01680">
    <property type="entry name" value="Salvage_MtnX"/>
    <property type="match status" value="1"/>
</dbReference>
<dbReference type="InterPro" id="IPR050849">
    <property type="entry name" value="HAD-like_hydrolase_phosphatase"/>
</dbReference>
<dbReference type="InterPro" id="IPR036412">
    <property type="entry name" value="HAD-like_sf"/>
</dbReference>
<dbReference type="InterPro" id="IPR017718">
    <property type="entry name" value="HAD-SF_hydro_IB_MtnX"/>
</dbReference>
<dbReference type="InterPro" id="IPR006384">
    <property type="entry name" value="HAD_hydro_PyrdxlP_Pase-like"/>
</dbReference>
<dbReference type="InterPro" id="IPR023214">
    <property type="entry name" value="HAD_sf"/>
</dbReference>
<dbReference type="NCBIfam" id="TIGR01489">
    <property type="entry name" value="DKMTPPase-SF"/>
    <property type="match status" value="1"/>
</dbReference>
<dbReference type="NCBIfam" id="TIGR01488">
    <property type="entry name" value="HAD-SF-IB"/>
    <property type="match status" value="1"/>
</dbReference>
<dbReference type="NCBIfam" id="NF007103">
    <property type="entry name" value="PRK09552.1"/>
    <property type="match status" value="1"/>
</dbReference>
<dbReference type="NCBIfam" id="TIGR03333">
    <property type="entry name" value="salvage_mtnX"/>
    <property type="match status" value="1"/>
</dbReference>
<dbReference type="PANTHER" id="PTHR28181:SF2">
    <property type="entry name" value="PHOSPHORIC MONOESTER HYDROLASE"/>
    <property type="match status" value="1"/>
</dbReference>
<dbReference type="PANTHER" id="PTHR28181">
    <property type="entry name" value="UPF0655 PROTEIN YCR015C"/>
    <property type="match status" value="1"/>
</dbReference>
<dbReference type="Pfam" id="PF12710">
    <property type="entry name" value="HAD"/>
    <property type="match status" value="1"/>
</dbReference>
<dbReference type="SUPFAM" id="SSF56784">
    <property type="entry name" value="HAD-like"/>
    <property type="match status" value="1"/>
</dbReference>
<organism>
    <name type="scientific">Bacillus thuringiensis (strain Al Hakam)</name>
    <dbReference type="NCBI Taxonomy" id="412694"/>
    <lineage>
        <taxon>Bacteria</taxon>
        <taxon>Bacillati</taxon>
        <taxon>Bacillota</taxon>
        <taxon>Bacilli</taxon>
        <taxon>Bacillales</taxon>
        <taxon>Bacillaceae</taxon>
        <taxon>Bacillus</taxon>
        <taxon>Bacillus cereus group</taxon>
    </lineage>
</organism>
<comment type="function">
    <text evidence="1">Dephosphorylates 2-hydroxy-3-keto-5-methylthiopentenyl-1-phosphate (HK-MTPenyl-1-P) yielding 1,2-dihydroxy-3-keto-5-methylthiopentene (DHK-MTPene).</text>
</comment>
<comment type="catalytic activity">
    <reaction evidence="1">
        <text>2-hydroxy-5-methylsulfanyl-3-oxopent-1-enyl phosphate + H2O = 1,2-dihydroxy-5-(methylsulfanyl)pent-1-en-3-one + phosphate</text>
        <dbReference type="Rhea" id="RHEA:14481"/>
        <dbReference type="ChEBI" id="CHEBI:15377"/>
        <dbReference type="ChEBI" id="CHEBI:43474"/>
        <dbReference type="ChEBI" id="CHEBI:49252"/>
        <dbReference type="ChEBI" id="CHEBI:59505"/>
        <dbReference type="EC" id="3.1.3.87"/>
    </reaction>
</comment>
<comment type="pathway">
    <text evidence="1">Amino-acid biosynthesis; L-methionine biosynthesis via salvage pathway; L-methionine from S-methyl-5-thio-alpha-D-ribose 1-phosphate: step 4/6.</text>
</comment>
<comment type="similarity">
    <text evidence="1">Belongs to the HAD-like hydrolase superfamily. MtnX family.</text>
</comment>
<sequence length="219" mass="25290">MSIQVFCDFDGTITNNDNIMSIMEKFAPPEAEEVKNRILSQELSIQEGVSQLFQLIPTNLHDEIIQFLIETAEIRNGFHEFIQFVNENNISFYVISGGMDFFVYPLLQGLIPKEQIYCNETDFSNEYITVNWPHPCDRLCQNHCGLCKSSLIRKLSDTNDFHIVIGDSITDLQAAKQADKVFARDFLITKCEENHISYTPFETFHDVQTELKHLLEVKL</sequence>
<protein>
    <recommendedName>
        <fullName evidence="1">2-hydroxy-3-keto-5-methylthiopentenyl-1-phosphate phosphatase</fullName>
        <shortName evidence="1">HK-MTPenyl-1-P phosphatase</shortName>
        <ecNumber evidence="1">3.1.3.87</ecNumber>
    </recommendedName>
</protein>
<gene>
    <name evidence="1" type="primary">mtnX</name>
    <name type="ordered locus">BALH_3654</name>
</gene>
<proteinExistence type="inferred from homology"/>
<evidence type="ECO:0000255" key="1">
    <source>
        <dbReference type="HAMAP-Rule" id="MF_01680"/>
    </source>
</evidence>